<reference key="1">
    <citation type="journal article" date="2009" name="PLoS Genet.">
        <title>Organised genome dynamics in the Escherichia coli species results in highly diverse adaptive paths.</title>
        <authorList>
            <person name="Touchon M."/>
            <person name="Hoede C."/>
            <person name="Tenaillon O."/>
            <person name="Barbe V."/>
            <person name="Baeriswyl S."/>
            <person name="Bidet P."/>
            <person name="Bingen E."/>
            <person name="Bonacorsi S."/>
            <person name="Bouchier C."/>
            <person name="Bouvet O."/>
            <person name="Calteau A."/>
            <person name="Chiapello H."/>
            <person name="Clermont O."/>
            <person name="Cruveiller S."/>
            <person name="Danchin A."/>
            <person name="Diard M."/>
            <person name="Dossat C."/>
            <person name="Karoui M.E."/>
            <person name="Frapy E."/>
            <person name="Garry L."/>
            <person name="Ghigo J.M."/>
            <person name="Gilles A.M."/>
            <person name="Johnson J."/>
            <person name="Le Bouguenec C."/>
            <person name="Lescat M."/>
            <person name="Mangenot S."/>
            <person name="Martinez-Jehanne V."/>
            <person name="Matic I."/>
            <person name="Nassif X."/>
            <person name="Oztas S."/>
            <person name="Petit M.A."/>
            <person name="Pichon C."/>
            <person name="Rouy Z."/>
            <person name="Ruf C.S."/>
            <person name="Schneider D."/>
            <person name="Tourret J."/>
            <person name="Vacherie B."/>
            <person name="Vallenet D."/>
            <person name="Medigue C."/>
            <person name="Rocha E.P.C."/>
            <person name="Denamur E."/>
        </authorList>
    </citation>
    <scope>NUCLEOTIDE SEQUENCE [LARGE SCALE GENOMIC DNA]</scope>
    <source>
        <strain>IAI1</strain>
    </source>
</reference>
<keyword id="KW-0378">Hydrolase</keyword>
<keyword id="KW-0464">Manganese</keyword>
<dbReference type="EC" id="3.5.4.2" evidence="1"/>
<dbReference type="EMBL" id="CU928160">
    <property type="protein sequence ID" value="CAR00636.1"/>
    <property type="molecule type" value="Genomic_DNA"/>
</dbReference>
<dbReference type="SMR" id="B7M4F2"/>
<dbReference type="KEGG" id="ecr:ECIAI1_3841"/>
<dbReference type="HOGENOM" id="CLU_027935_0_0_6"/>
<dbReference type="GO" id="GO:0000034">
    <property type="term" value="F:adenine deaminase activity"/>
    <property type="evidence" value="ECO:0007669"/>
    <property type="project" value="UniProtKB-UniRule"/>
</dbReference>
<dbReference type="GO" id="GO:0006146">
    <property type="term" value="P:adenine catabolic process"/>
    <property type="evidence" value="ECO:0007669"/>
    <property type="project" value="InterPro"/>
</dbReference>
<dbReference type="CDD" id="cd01295">
    <property type="entry name" value="AdeC"/>
    <property type="match status" value="1"/>
</dbReference>
<dbReference type="FunFam" id="3.20.20.140:FF:000016">
    <property type="entry name" value="Adenine deaminase"/>
    <property type="match status" value="1"/>
</dbReference>
<dbReference type="Gene3D" id="3.20.20.140">
    <property type="entry name" value="Metal-dependent hydrolases"/>
    <property type="match status" value="1"/>
</dbReference>
<dbReference type="Gene3D" id="2.30.40.10">
    <property type="entry name" value="Urease, subunit C, domain 1"/>
    <property type="match status" value="1"/>
</dbReference>
<dbReference type="HAMAP" id="MF_01518">
    <property type="entry name" value="Adenine_deamin"/>
    <property type="match status" value="1"/>
</dbReference>
<dbReference type="InterPro" id="IPR006679">
    <property type="entry name" value="Adenine_deam"/>
</dbReference>
<dbReference type="InterPro" id="IPR026912">
    <property type="entry name" value="Adenine_deam_C"/>
</dbReference>
<dbReference type="InterPro" id="IPR006680">
    <property type="entry name" value="Amidohydro-rel"/>
</dbReference>
<dbReference type="InterPro" id="IPR011059">
    <property type="entry name" value="Metal-dep_hydrolase_composite"/>
</dbReference>
<dbReference type="InterPro" id="IPR032466">
    <property type="entry name" value="Metal_Hydrolase"/>
</dbReference>
<dbReference type="NCBIfam" id="TIGR01178">
    <property type="entry name" value="ade"/>
    <property type="match status" value="1"/>
</dbReference>
<dbReference type="NCBIfam" id="NF007457">
    <property type="entry name" value="PRK10027.1"/>
    <property type="match status" value="1"/>
</dbReference>
<dbReference type="PANTHER" id="PTHR11113:SF2">
    <property type="entry name" value="ADENINE DEAMINASE"/>
    <property type="match status" value="1"/>
</dbReference>
<dbReference type="PANTHER" id="PTHR11113">
    <property type="entry name" value="N-ACETYLGLUCOSAMINE-6-PHOSPHATE DEACETYLASE"/>
    <property type="match status" value="1"/>
</dbReference>
<dbReference type="Pfam" id="PF13382">
    <property type="entry name" value="Adenine_deam_C"/>
    <property type="match status" value="1"/>
</dbReference>
<dbReference type="Pfam" id="PF01979">
    <property type="entry name" value="Amidohydro_1"/>
    <property type="match status" value="1"/>
</dbReference>
<dbReference type="SUPFAM" id="SSF51338">
    <property type="entry name" value="Composite domain of metallo-dependent hydrolases"/>
    <property type="match status" value="1"/>
</dbReference>
<dbReference type="SUPFAM" id="SSF51556">
    <property type="entry name" value="Metallo-dependent hydrolases"/>
    <property type="match status" value="1"/>
</dbReference>
<protein>
    <recommendedName>
        <fullName evidence="1">Adenine deaminase</fullName>
        <shortName evidence="1">Adenase</shortName>
        <shortName evidence="1">Adenine aminase</shortName>
        <ecNumber evidence="1">3.5.4.2</ecNumber>
    </recommendedName>
</protein>
<gene>
    <name evidence="1" type="primary">ade</name>
    <name type="ordered locus">ECIAI1_3841</name>
</gene>
<feature type="chain" id="PRO_1000146235" description="Adenine deaminase">
    <location>
        <begin position="1"/>
        <end position="588"/>
    </location>
</feature>
<organism>
    <name type="scientific">Escherichia coli O8 (strain IAI1)</name>
    <dbReference type="NCBI Taxonomy" id="585034"/>
    <lineage>
        <taxon>Bacteria</taxon>
        <taxon>Pseudomonadati</taxon>
        <taxon>Pseudomonadota</taxon>
        <taxon>Gammaproteobacteria</taxon>
        <taxon>Enterobacterales</taxon>
        <taxon>Enterobacteriaceae</taxon>
        <taxon>Escherichia</taxon>
    </lineage>
</organism>
<comment type="catalytic activity">
    <reaction evidence="1">
        <text>adenine + H2O + H(+) = hypoxanthine + NH4(+)</text>
        <dbReference type="Rhea" id="RHEA:23688"/>
        <dbReference type="ChEBI" id="CHEBI:15377"/>
        <dbReference type="ChEBI" id="CHEBI:15378"/>
        <dbReference type="ChEBI" id="CHEBI:16708"/>
        <dbReference type="ChEBI" id="CHEBI:17368"/>
        <dbReference type="ChEBI" id="CHEBI:28938"/>
        <dbReference type="EC" id="3.5.4.2"/>
    </reaction>
</comment>
<comment type="cofactor">
    <cofactor evidence="1">
        <name>Mn(2+)</name>
        <dbReference type="ChEBI" id="CHEBI:29035"/>
    </cofactor>
</comment>
<comment type="subunit">
    <text evidence="1">Homodimer.</text>
</comment>
<comment type="similarity">
    <text evidence="1">Belongs to the metallo-dependent hydrolases superfamily. Adenine deaminase family.</text>
</comment>
<proteinExistence type="inferred from homology"/>
<name>ADEC_ECO8A</name>
<sequence length="588" mass="63709">MNNSINHKFHHISRAEYQELLAVSRGDAVADYIIDNVSILDLINGGEISGPIVIKGRYIAGVGAEYADAPALQRIDARGATAVPGFIDAHLHIESSMMTPVTFETATLPRGLTTVICDPHEIVNVMGEAGFAWFARCAEQARQNQYLQVSSCVPALEGCDVNGASFTLEQMLAWRDHPQVTGLAEMMDYPGVISGQNALLDKLDAFRHLTLDGHCPGLGGKELNAYITAGIENCHESYQLEEGRRKLQLGMSLMIREGSAARNLNALAPLINEFNSPQCMLCTDDRNPWEIAHEGHIDALIRRLIEQHNVPLHVAYRVASWSTARHFGLNHLGLLAPGKQADIVLLSDARKVTVQQVLVKGEPIDAQTLQAEESARLAQSAPPYGNTIARQPVSASDFALQFTPGKRYRVIDVIHNELITHSHSSVYSENGFDRDDVSFIAVLERYGQRLAPACGLLGGFGLNEGALAATVSHDSHNIVVIGRSAEEMALAVNQVIQDGGGLCVVRNGQVQSHLPLPIAGLMSTDTAQSLAEQIDALKAAARECGPLPDEPFIQMAFLSLPVIPALKLTSQGLFDGEKFAFTTLEVTE</sequence>
<accession>B7M4F2</accession>
<evidence type="ECO:0000255" key="1">
    <source>
        <dbReference type="HAMAP-Rule" id="MF_01518"/>
    </source>
</evidence>